<evidence type="ECO:0000255" key="1">
    <source>
        <dbReference type="HAMAP-Rule" id="MF_01014"/>
    </source>
</evidence>
<reference key="1">
    <citation type="submission" date="2008-05" db="EMBL/GenBank/DDBJ databases">
        <title>Complete sequence of Shigella boydii serotype 18 strain BS512.</title>
        <authorList>
            <person name="Rasko D.A."/>
            <person name="Rosovitz M."/>
            <person name="Maurelli A.T."/>
            <person name="Myers G."/>
            <person name="Seshadri R."/>
            <person name="Cer R."/>
            <person name="Jiang L."/>
            <person name="Ravel J."/>
            <person name="Sebastian Y."/>
        </authorList>
    </citation>
    <scope>NUCLEOTIDE SEQUENCE [LARGE SCALE GENOMIC DNA]</scope>
    <source>
        <strain>CDC 3083-94 / BS512</strain>
    </source>
</reference>
<feature type="chain" id="PRO_1000190559" description="1-(5-phosphoribosyl)-5-[(5-phosphoribosylamino)methylideneamino] imidazole-4-carboxamide isomerase">
    <location>
        <begin position="1"/>
        <end position="245"/>
    </location>
</feature>
<feature type="active site" description="Proton acceptor" evidence="1">
    <location>
        <position position="7"/>
    </location>
</feature>
<feature type="active site" description="Proton donor" evidence="1">
    <location>
        <position position="129"/>
    </location>
</feature>
<gene>
    <name evidence="1" type="primary">hisA</name>
    <name type="ordered locus">SbBS512_E1208</name>
</gene>
<proteinExistence type="inferred from homology"/>
<sequence>MIIPALDLIDGTVVRLHQGDYGKQRDYGNDPLPRLQDYAAQGAEVLHLVDLTGAKDPAKRQIPLIKTLVAGVNVPVQVGGGVRSEEDVAALLEAGVARVVVGSTAVKSPKMVKGWFERFGADALVLALDVRIDEQGNKQVAVSGWQENSGVSLEQLVETYLPVGLKHVLCTDISRDGTLAGSNVSLYEEVCARYPQVAFQSSGGIGDINDVAALRGTGVRGVIVGRALLEGKFTVKEAIACWQNA</sequence>
<comment type="catalytic activity">
    <reaction evidence="1">
        <text>1-(5-phospho-beta-D-ribosyl)-5-[(5-phospho-beta-D-ribosylamino)methylideneamino]imidazole-4-carboxamide = 5-[(5-phospho-1-deoxy-D-ribulos-1-ylimino)methylamino]-1-(5-phospho-beta-D-ribosyl)imidazole-4-carboxamide</text>
        <dbReference type="Rhea" id="RHEA:15469"/>
        <dbReference type="ChEBI" id="CHEBI:58435"/>
        <dbReference type="ChEBI" id="CHEBI:58525"/>
        <dbReference type="EC" id="5.3.1.16"/>
    </reaction>
</comment>
<comment type="pathway">
    <text evidence="1">Amino-acid biosynthesis; L-histidine biosynthesis; L-histidine from 5-phospho-alpha-D-ribose 1-diphosphate: step 4/9.</text>
</comment>
<comment type="subcellular location">
    <subcellularLocation>
        <location evidence="1">Cytoplasm</location>
    </subcellularLocation>
</comment>
<comment type="similarity">
    <text evidence="1">Belongs to the HisA/HisF family.</text>
</comment>
<organism>
    <name type="scientific">Shigella boydii serotype 18 (strain CDC 3083-94 / BS512)</name>
    <dbReference type="NCBI Taxonomy" id="344609"/>
    <lineage>
        <taxon>Bacteria</taxon>
        <taxon>Pseudomonadati</taxon>
        <taxon>Pseudomonadota</taxon>
        <taxon>Gammaproteobacteria</taxon>
        <taxon>Enterobacterales</taxon>
        <taxon>Enterobacteriaceae</taxon>
        <taxon>Shigella</taxon>
    </lineage>
</organism>
<name>HIS4_SHIB3</name>
<accession>B2TYF6</accession>
<protein>
    <recommendedName>
        <fullName evidence="1">1-(5-phosphoribosyl)-5-[(5-phosphoribosylamino)methylideneamino] imidazole-4-carboxamide isomerase</fullName>
        <ecNumber evidence="1">5.3.1.16</ecNumber>
    </recommendedName>
    <alternativeName>
        <fullName evidence="1">Phosphoribosylformimino-5-aminoimidazole carboxamide ribotide isomerase</fullName>
    </alternativeName>
</protein>
<dbReference type="EC" id="5.3.1.16" evidence="1"/>
<dbReference type="EMBL" id="CP001063">
    <property type="protein sequence ID" value="ACD06612.1"/>
    <property type="molecule type" value="Genomic_DNA"/>
</dbReference>
<dbReference type="RefSeq" id="WP_000586461.1">
    <property type="nucleotide sequence ID" value="NC_010658.1"/>
</dbReference>
<dbReference type="SMR" id="B2TYF6"/>
<dbReference type="STRING" id="344609.SbBS512_E1208"/>
<dbReference type="KEGG" id="sbc:SbBS512_E1208"/>
<dbReference type="HOGENOM" id="CLU_048577_1_2_6"/>
<dbReference type="UniPathway" id="UPA00031">
    <property type="reaction ID" value="UER00009"/>
</dbReference>
<dbReference type="Proteomes" id="UP000001030">
    <property type="component" value="Chromosome"/>
</dbReference>
<dbReference type="GO" id="GO:0005737">
    <property type="term" value="C:cytoplasm"/>
    <property type="evidence" value="ECO:0007669"/>
    <property type="project" value="UniProtKB-SubCell"/>
</dbReference>
<dbReference type="GO" id="GO:0003949">
    <property type="term" value="F:1-(5-phosphoribosyl)-5-[(5-phosphoribosylamino)methylideneamino]imidazole-4-carboxamide isomerase activity"/>
    <property type="evidence" value="ECO:0007669"/>
    <property type="project" value="UniProtKB-UniRule"/>
</dbReference>
<dbReference type="GO" id="GO:0000105">
    <property type="term" value="P:L-histidine biosynthetic process"/>
    <property type="evidence" value="ECO:0007669"/>
    <property type="project" value="UniProtKB-UniRule"/>
</dbReference>
<dbReference type="GO" id="GO:0000162">
    <property type="term" value="P:L-tryptophan biosynthetic process"/>
    <property type="evidence" value="ECO:0007669"/>
    <property type="project" value="TreeGrafter"/>
</dbReference>
<dbReference type="CDD" id="cd04732">
    <property type="entry name" value="HisA"/>
    <property type="match status" value="1"/>
</dbReference>
<dbReference type="FunFam" id="3.20.20.70:FF:000009">
    <property type="entry name" value="1-(5-phosphoribosyl)-5-[(5-phosphoribosylamino)methylideneamino] imidazole-4-carboxamide isomerase"/>
    <property type="match status" value="1"/>
</dbReference>
<dbReference type="Gene3D" id="3.20.20.70">
    <property type="entry name" value="Aldolase class I"/>
    <property type="match status" value="1"/>
</dbReference>
<dbReference type="HAMAP" id="MF_01014">
    <property type="entry name" value="HisA"/>
    <property type="match status" value="1"/>
</dbReference>
<dbReference type="InterPro" id="IPR013785">
    <property type="entry name" value="Aldolase_TIM"/>
</dbReference>
<dbReference type="InterPro" id="IPR006062">
    <property type="entry name" value="His_biosynth"/>
</dbReference>
<dbReference type="InterPro" id="IPR006063">
    <property type="entry name" value="HisA_bact_arch"/>
</dbReference>
<dbReference type="InterPro" id="IPR044524">
    <property type="entry name" value="Isoase_HisA-like"/>
</dbReference>
<dbReference type="InterPro" id="IPR023016">
    <property type="entry name" value="Isoase_HisA-like_bact"/>
</dbReference>
<dbReference type="InterPro" id="IPR011060">
    <property type="entry name" value="RibuloseP-bd_barrel"/>
</dbReference>
<dbReference type="NCBIfam" id="TIGR00007">
    <property type="entry name" value="1-(5-phosphoribosyl)-5-[(5-phosphoribosylamino)methylideneamino]imidazole-4-carboxamide isomerase"/>
    <property type="match status" value="1"/>
</dbReference>
<dbReference type="PANTHER" id="PTHR43090">
    <property type="entry name" value="1-(5-PHOSPHORIBOSYL)-5-[(5-PHOSPHORIBOSYLAMINO)METHYLIDENEAMINO] IMIDAZOLE-4-CARBOXAMIDE ISOMERASE"/>
    <property type="match status" value="1"/>
</dbReference>
<dbReference type="PANTHER" id="PTHR43090:SF2">
    <property type="entry name" value="1-(5-PHOSPHORIBOSYL)-5-[(5-PHOSPHORIBOSYLAMINO)METHYLIDENEAMINO] IMIDAZOLE-4-CARBOXAMIDE ISOMERASE"/>
    <property type="match status" value="1"/>
</dbReference>
<dbReference type="Pfam" id="PF00977">
    <property type="entry name" value="His_biosynth"/>
    <property type="match status" value="1"/>
</dbReference>
<dbReference type="SUPFAM" id="SSF51366">
    <property type="entry name" value="Ribulose-phoshate binding barrel"/>
    <property type="match status" value="1"/>
</dbReference>
<keyword id="KW-0028">Amino-acid biosynthesis</keyword>
<keyword id="KW-0963">Cytoplasm</keyword>
<keyword id="KW-0368">Histidine biosynthesis</keyword>
<keyword id="KW-0413">Isomerase</keyword>
<keyword id="KW-1185">Reference proteome</keyword>